<reference key="1">
    <citation type="journal article" date="2003" name="Nature">
        <title>Genome sequence of Bacillus cereus and comparative analysis with Bacillus anthracis.</title>
        <authorList>
            <person name="Ivanova N."/>
            <person name="Sorokin A."/>
            <person name="Anderson I."/>
            <person name="Galleron N."/>
            <person name="Candelon B."/>
            <person name="Kapatral V."/>
            <person name="Bhattacharyya A."/>
            <person name="Reznik G."/>
            <person name="Mikhailova N."/>
            <person name="Lapidus A."/>
            <person name="Chu L."/>
            <person name="Mazur M."/>
            <person name="Goltsman E."/>
            <person name="Larsen N."/>
            <person name="D'Souza M."/>
            <person name="Walunas T."/>
            <person name="Grechkin Y."/>
            <person name="Pusch G."/>
            <person name="Haselkorn R."/>
            <person name="Fonstein M."/>
            <person name="Ehrlich S.D."/>
            <person name="Overbeek R."/>
            <person name="Kyrpides N.C."/>
        </authorList>
    </citation>
    <scope>NUCLEOTIDE SEQUENCE [LARGE SCALE GENOMIC DNA]</scope>
    <source>
        <strain>ATCC 14579 / DSM 31 / CCUG 7414 / JCM 2152 / NBRC 15305 / NCIMB 9373 / NCTC 2599 / NRRL B-3711</strain>
    </source>
</reference>
<feature type="chain" id="PRO_0000110396" description="Beta-ketoacyl-[acyl-carrier-protein] synthase III 2">
    <location>
        <begin position="1"/>
        <end position="327"/>
    </location>
</feature>
<feature type="region of interest" description="ACP-binding" evidence="1">
    <location>
        <begin position="252"/>
        <end position="256"/>
    </location>
</feature>
<feature type="active site" evidence="1">
    <location>
        <position position="114"/>
    </location>
</feature>
<feature type="active site" evidence="1">
    <location>
        <position position="251"/>
    </location>
</feature>
<feature type="active site" evidence="1">
    <location>
        <position position="281"/>
    </location>
</feature>
<protein>
    <recommendedName>
        <fullName evidence="1">Beta-ketoacyl-[acyl-carrier-protein] synthase III 2</fullName>
        <shortName evidence="1">Beta-ketoacyl-ACP synthase III 2</shortName>
        <shortName evidence="1">KAS III 2</shortName>
        <ecNumber evidence="1">2.3.1.180</ecNumber>
    </recommendedName>
    <alternativeName>
        <fullName evidence="1">3-oxoacyl-[acyl-carrier-protein] synthase 3 2</fullName>
    </alternativeName>
    <alternativeName>
        <fullName evidence="1">3-oxoacyl-[acyl-carrier-protein] synthase III 2</fullName>
    </alternativeName>
</protein>
<name>FABH2_BACCR</name>
<gene>
    <name evidence="1" type="primary">fabH2</name>
    <name type="ordered locus">BC_1760</name>
</gene>
<accession>Q81F42</accession>
<comment type="function">
    <text evidence="1">Catalyzes the condensation reaction of fatty acid synthesis by the addition to an acyl acceptor of two carbons from malonyl-ACP. Catalyzes the first condensation reaction which initiates fatty acid synthesis and may therefore play a role in governing the total rate of fatty acid production. Possesses both acetoacetyl-ACP synthase and acetyl transacylase activities. Its substrate specificity determines the biosynthesis of branched-chain and/or straight-chain of fatty acids.</text>
</comment>
<comment type="catalytic activity">
    <reaction evidence="1">
        <text>malonyl-[ACP] + acetyl-CoA + H(+) = 3-oxobutanoyl-[ACP] + CO2 + CoA</text>
        <dbReference type="Rhea" id="RHEA:12080"/>
        <dbReference type="Rhea" id="RHEA-COMP:9623"/>
        <dbReference type="Rhea" id="RHEA-COMP:9625"/>
        <dbReference type="ChEBI" id="CHEBI:15378"/>
        <dbReference type="ChEBI" id="CHEBI:16526"/>
        <dbReference type="ChEBI" id="CHEBI:57287"/>
        <dbReference type="ChEBI" id="CHEBI:57288"/>
        <dbReference type="ChEBI" id="CHEBI:78449"/>
        <dbReference type="ChEBI" id="CHEBI:78450"/>
        <dbReference type="EC" id="2.3.1.180"/>
    </reaction>
</comment>
<comment type="pathway">
    <text evidence="1">Lipid metabolism; fatty acid biosynthesis.</text>
</comment>
<comment type="subunit">
    <text evidence="1">Homodimer.</text>
</comment>
<comment type="subcellular location">
    <subcellularLocation>
        <location evidence="1">Cytoplasm</location>
    </subcellularLocation>
</comment>
<comment type="domain">
    <text evidence="1">The last Arg residue of the ACP-binding site is essential for the weak association between ACP/AcpP and FabH.</text>
</comment>
<comment type="similarity">
    <text evidence="1">Belongs to the thiolase-like superfamily. FabH family.</text>
</comment>
<organism>
    <name type="scientific">Bacillus cereus (strain ATCC 14579 / DSM 31 / CCUG 7414 / JCM 2152 / NBRC 15305 / NCIMB 9373 / NCTC 2599 / NRRL B-3711)</name>
    <dbReference type="NCBI Taxonomy" id="226900"/>
    <lineage>
        <taxon>Bacteria</taxon>
        <taxon>Bacillati</taxon>
        <taxon>Bacillota</taxon>
        <taxon>Bacilli</taxon>
        <taxon>Bacillales</taxon>
        <taxon>Bacillaceae</taxon>
        <taxon>Bacillus</taxon>
        <taxon>Bacillus cereus group</taxon>
    </lineage>
</organism>
<evidence type="ECO:0000255" key="1">
    <source>
        <dbReference type="HAMAP-Rule" id="MF_01815"/>
    </source>
</evidence>
<proteinExistence type="inferred from homology"/>
<keyword id="KW-0012">Acyltransferase</keyword>
<keyword id="KW-0963">Cytoplasm</keyword>
<keyword id="KW-0275">Fatty acid biosynthesis</keyword>
<keyword id="KW-0276">Fatty acid metabolism</keyword>
<keyword id="KW-0444">Lipid biosynthesis</keyword>
<keyword id="KW-0443">Lipid metabolism</keyword>
<keyword id="KW-0511">Multifunctional enzyme</keyword>
<keyword id="KW-1185">Reference proteome</keyword>
<keyword id="KW-0808">Transferase</keyword>
<dbReference type="EC" id="2.3.1.180" evidence="1"/>
<dbReference type="EMBL" id="AE016877">
    <property type="protein sequence ID" value="AAP08736.1"/>
    <property type="molecule type" value="Genomic_DNA"/>
</dbReference>
<dbReference type="RefSeq" id="NP_831535.1">
    <property type="nucleotide sequence ID" value="NC_004722.1"/>
</dbReference>
<dbReference type="RefSeq" id="WP_000555762.1">
    <property type="nucleotide sequence ID" value="NC_004722.1"/>
</dbReference>
<dbReference type="SMR" id="Q81F42"/>
<dbReference type="STRING" id="226900.BC_1760"/>
<dbReference type="KEGG" id="bce:BC1760"/>
<dbReference type="PATRIC" id="fig|226900.8.peg.1749"/>
<dbReference type="HOGENOM" id="CLU_039592_3_1_9"/>
<dbReference type="OrthoDB" id="9815506at2"/>
<dbReference type="UniPathway" id="UPA00094"/>
<dbReference type="Proteomes" id="UP000001417">
    <property type="component" value="Chromosome"/>
</dbReference>
<dbReference type="GO" id="GO:0005737">
    <property type="term" value="C:cytoplasm"/>
    <property type="evidence" value="ECO:0007669"/>
    <property type="project" value="UniProtKB-SubCell"/>
</dbReference>
<dbReference type="GO" id="GO:0004315">
    <property type="term" value="F:3-oxoacyl-[acyl-carrier-protein] synthase activity"/>
    <property type="evidence" value="ECO:0007669"/>
    <property type="project" value="InterPro"/>
</dbReference>
<dbReference type="GO" id="GO:0033818">
    <property type="term" value="F:beta-ketoacyl-acyl-carrier-protein synthase III activity"/>
    <property type="evidence" value="ECO:0007669"/>
    <property type="project" value="UniProtKB-UniRule"/>
</dbReference>
<dbReference type="GO" id="GO:0006633">
    <property type="term" value="P:fatty acid biosynthetic process"/>
    <property type="evidence" value="ECO:0007669"/>
    <property type="project" value="UniProtKB-UniRule"/>
</dbReference>
<dbReference type="GO" id="GO:0044550">
    <property type="term" value="P:secondary metabolite biosynthetic process"/>
    <property type="evidence" value="ECO:0000318"/>
    <property type="project" value="GO_Central"/>
</dbReference>
<dbReference type="CDD" id="cd00830">
    <property type="entry name" value="KAS_III"/>
    <property type="match status" value="1"/>
</dbReference>
<dbReference type="FunFam" id="3.40.47.10:FF:000004">
    <property type="entry name" value="3-oxoacyl-[acyl-carrier-protein] synthase 3"/>
    <property type="match status" value="1"/>
</dbReference>
<dbReference type="Gene3D" id="3.40.47.10">
    <property type="match status" value="1"/>
</dbReference>
<dbReference type="HAMAP" id="MF_01815">
    <property type="entry name" value="FabH"/>
    <property type="match status" value="1"/>
</dbReference>
<dbReference type="InterPro" id="IPR013747">
    <property type="entry name" value="ACP_syn_III_C"/>
</dbReference>
<dbReference type="InterPro" id="IPR013751">
    <property type="entry name" value="ACP_syn_III_N"/>
</dbReference>
<dbReference type="InterPro" id="IPR004655">
    <property type="entry name" value="FabH"/>
</dbReference>
<dbReference type="InterPro" id="IPR016039">
    <property type="entry name" value="Thiolase-like"/>
</dbReference>
<dbReference type="NCBIfam" id="TIGR00747">
    <property type="entry name" value="fabH"/>
    <property type="match status" value="1"/>
</dbReference>
<dbReference type="NCBIfam" id="NF006829">
    <property type="entry name" value="PRK09352.1"/>
    <property type="match status" value="1"/>
</dbReference>
<dbReference type="PANTHER" id="PTHR34069">
    <property type="entry name" value="3-OXOACYL-[ACYL-CARRIER-PROTEIN] SYNTHASE 3"/>
    <property type="match status" value="1"/>
</dbReference>
<dbReference type="PANTHER" id="PTHR34069:SF2">
    <property type="entry name" value="BETA-KETOACYL-[ACYL-CARRIER-PROTEIN] SYNTHASE III"/>
    <property type="match status" value="1"/>
</dbReference>
<dbReference type="Pfam" id="PF08545">
    <property type="entry name" value="ACP_syn_III"/>
    <property type="match status" value="1"/>
</dbReference>
<dbReference type="Pfam" id="PF08541">
    <property type="entry name" value="ACP_syn_III_C"/>
    <property type="match status" value="1"/>
</dbReference>
<dbReference type="SUPFAM" id="SSF53901">
    <property type="entry name" value="Thiolase-like"/>
    <property type="match status" value="1"/>
</dbReference>
<sequence>MHSKSRITAIGTYVPDQILSNNDLEKMVHTNDEWIVQRTGMRERRIASEEEYSSNLAIKAIENLCTTYKKNLEDVDCIIVATTTADYVFPSVACQIQQYFNIPHTLAFDLNATCAGFTYGLHVGNSLITSESHEKVLVVATETLSKVTDYTDRTTCILFGDGAGAILLERDENTPSFIAAHMGTNGDGGIHLYRTNLSTTMNGTPLQTNEKIVQNGREVYKWATRTVPKGIKNLLHTVNMQVDDIDWFIPHSANLRMIESICEKSQIPIQKTLTSVEYMGNTSSVTIPLALNLAIKEGKLNNGDTLLLYGFGGGLTHLGLIVEWNLI</sequence>